<protein>
    <recommendedName>
        <fullName evidence="2">Small ribosomal subunit protein uS3c</fullName>
    </recommendedName>
    <alternativeName>
        <fullName>30S ribosomal protein S3, chloroplastic</fullName>
    </alternativeName>
</protein>
<sequence>MGQKINPLGFRLGTTQSHHSLWFAQPKKYSEGLEEDKKIRDCIKNYVQKNIRISSGMEGIARIEIQKRIDLIQIIIYMGFPKLLIEDKPRRVEELQMNVQKELNCVNRKLNIAITRISNPYGDPNILAEFIAGQLKNRVSFRKAMKKAIELTEQANTKGIQVQIAGRIDGKEIARVEWIREGRVPLQTIEAKIDYCSYTVRTIYGVLGIKIWIFVDEE</sequence>
<accession>A4QJW9</accession>
<comment type="subunit">
    <text evidence="1">Part of the 30S ribosomal subunit.</text>
</comment>
<comment type="subcellular location">
    <subcellularLocation>
        <location>Plastid</location>
        <location>Chloroplast</location>
    </subcellularLocation>
</comment>
<comment type="similarity">
    <text evidence="2">Belongs to the universal ribosomal protein uS3 family.</text>
</comment>
<feature type="chain" id="PRO_0000293951" description="Small ribosomal subunit protein uS3c">
    <location>
        <begin position="1"/>
        <end position="218"/>
    </location>
</feature>
<feature type="domain" description="KH type-2">
    <location>
        <begin position="47"/>
        <end position="118"/>
    </location>
</feature>
<dbReference type="EMBL" id="AP009368">
    <property type="protein sequence ID" value="BAF49977.1"/>
    <property type="molecule type" value="Genomic_DNA"/>
</dbReference>
<dbReference type="RefSeq" id="YP_001123153.1">
    <property type="nucleotide sequence ID" value="NC_009267.1"/>
</dbReference>
<dbReference type="SMR" id="A4QJW9"/>
<dbReference type="GeneID" id="4962407"/>
<dbReference type="GO" id="GO:0009507">
    <property type="term" value="C:chloroplast"/>
    <property type="evidence" value="ECO:0007669"/>
    <property type="project" value="UniProtKB-SubCell"/>
</dbReference>
<dbReference type="GO" id="GO:0022627">
    <property type="term" value="C:cytosolic small ribosomal subunit"/>
    <property type="evidence" value="ECO:0007669"/>
    <property type="project" value="TreeGrafter"/>
</dbReference>
<dbReference type="GO" id="GO:0019843">
    <property type="term" value="F:rRNA binding"/>
    <property type="evidence" value="ECO:0007669"/>
    <property type="project" value="UniProtKB-UniRule"/>
</dbReference>
<dbReference type="GO" id="GO:0003735">
    <property type="term" value="F:structural constituent of ribosome"/>
    <property type="evidence" value="ECO:0007669"/>
    <property type="project" value="InterPro"/>
</dbReference>
<dbReference type="GO" id="GO:0006412">
    <property type="term" value="P:translation"/>
    <property type="evidence" value="ECO:0007669"/>
    <property type="project" value="UniProtKB-UniRule"/>
</dbReference>
<dbReference type="CDD" id="cd02412">
    <property type="entry name" value="KH-II_30S_S3"/>
    <property type="match status" value="1"/>
</dbReference>
<dbReference type="FunFam" id="3.30.1140.32:FF:000003">
    <property type="entry name" value="30S ribosomal protein S3, chloroplastic"/>
    <property type="match status" value="1"/>
</dbReference>
<dbReference type="FunFam" id="3.30.300.20:FF:000008">
    <property type="entry name" value="30S ribosomal protein S3, chloroplastic"/>
    <property type="match status" value="1"/>
</dbReference>
<dbReference type="Gene3D" id="3.30.300.20">
    <property type="match status" value="1"/>
</dbReference>
<dbReference type="Gene3D" id="3.30.1140.32">
    <property type="entry name" value="Ribosomal protein S3, C-terminal domain"/>
    <property type="match status" value="1"/>
</dbReference>
<dbReference type="HAMAP" id="MF_01309_B">
    <property type="entry name" value="Ribosomal_uS3_B"/>
    <property type="match status" value="1"/>
</dbReference>
<dbReference type="InterPro" id="IPR015946">
    <property type="entry name" value="KH_dom-like_a/b"/>
</dbReference>
<dbReference type="InterPro" id="IPR004044">
    <property type="entry name" value="KH_dom_type_2"/>
</dbReference>
<dbReference type="InterPro" id="IPR009019">
    <property type="entry name" value="KH_sf_prok-type"/>
</dbReference>
<dbReference type="InterPro" id="IPR036419">
    <property type="entry name" value="Ribosomal_S3_C_sf"/>
</dbReference>
<dbReference type="InterPro" id="IPR005704">
    <property type="entry name" value="Ribosomal_uS3_bac-typ"/>
</dbReference>
<dbReference type="InterPro" id="IPR001351">
    <property type="entry name" value="Ribosomal_uS3_C"/>
</dbReference>
<dbReference type="InterPro" id="IPR018280">
    <property type="entry name" value="Ribosomal_uS3_CS"/>
</dbReference>
<dbReference type="NCBIfam" id="TIGR01009">
    <property type="entry name" value="rpsC_bact"/>
    <property type="match status" value="1"/>
</dbReference>
<dbReference type="PANTHER" id="PTHR11760">
    <property type="entry name" value="30S/40S RIBOSOMAL PROTEIN S3"/>
    <property type="match status" value="1"/>
</dbReference>
<dbReference type="PANTHER" id="PTHR11760:SF19">
    <property type="entry name" value="SMALL RIBOSOMAL SUBUNIT PROTEIN US3C"/>
    <property type="match status" value="1"/>
</dbReference>
<dbReference type="Pfam" id="PF00189">
    <property type="entry name" value="Ribosomal_S3_C"/>
    <property type="match status" value="1"/>
</dbReference>
<dbReference type="SUPFAM" id="SSF54814">
    <property type="entry name" value="Prokaryotic type KH domain (KH-domain type II)"/>
    <property type="match status" value="1"/>
</dbReference>
<dbReference type="SUPFAM" id="SSF54821">
    <property type="entry name" value="Ribosomal protein S3 C-terminal domain"/>
    <property type="match status" value="1"/>
</dbReference>
<dbReference type="PROSITE" id="PS50823">
    <property type="entry name" value="KH_TYPE_2"/>
    <property type="match status" value="1"/>
</dbReference>
<dbReference type="PROSITE" id="PS00548">
    <property type="entry name" value="RIBOSOMAL_S3"/>
    <property type="match status" value="1"/>
</dbReference>
<reference key="1">
    <citation type="submission" date="2007-03" db="EMBL/GenBank/DDBJ databases">
        <title>Sequence analysis of Arabidopsis pumila JS2 chloroplast DNA.</title>
        <authorList>
            <person name="Hosouchi T."/>
            <person name="Tsuruoka H."/>
            <person name="Kotani H."/>
        </authorList>
    </citation>
    <scope>NUCLEOTIDE SEQUENCE [LARGE SCALE GENOMIC DNA]</scope>
</reference>
<proteinExistence type="inferred from homology"/>
<geneLocation type="chloroplast"/>
<keyword id="KW-0150">Chloroplast</keyword>
<keyword id="KW-0934">Plastid</keyword>
<keyword id="KW-0687">Ribonucleoprotein</keyword>
<keyword id="KW-0689">Ribosomal protein</keyword>
<keyword id="KW-0694">RNA-binding</keyword>
<keyword id="KW-0699">rRNA-binding</keyword>
<name>RR3_OLIPU</name>
<gene>
    <name type="primary">rps3</name>
</gene>
<organism>
    <name type="scientific">Olimarabidopsis pumila</name>
    <name type="common">Dwarf rocket</name>
    <name type="synonym">Arabidopsis griffithiana</name>
    <dbReference type="NCBI Taxonomy" id="74718"/>
    <lineage>
        <taxon>Eukaryota</taxon>
        <taxon>Viridiplantae</taxon>
        <taxon>Streptophyta</taxon>
        <taxon>Embryophyta</taxon>
        <taxon>Tracheophyta</taxon>
        <taxon>Spermatophyta</taxon>
        <taxon>Magnoliopsida</taxon>
        <taxon>eudicotyledons</taxon>
        <taxon>Gunneridae</taxon>
        <taxon>Pentapetalae</taxon>
        <taxon>rosids</taxon>
        <taxon>malvids</taxon>
        <taxon>Brassicales</taxon>
        <taxon>Brassicaceae</taxon>
        <taxon>Alyssopsideae</taxon>
        <taxon>Olimarabidopsis</taxon>
    </lineage>
</organism>
<evidence type="ECO:0000250" key="1"/>
<evidence type="ECO:0000305" key="2"/>